<organism>
    <name type="scientific">Helicobacter hepaticus (strain ATCC 51449 / 3B1)</name>
    <dbReference type="NCBI Taxonomy" id="235279"/>
    <lineage>
        <taxon>Bacteria</taxon>
        <taxon>Pseudomonadati</taxon>
        <taxon>Campylobacterota</taxon>
        <taxon>Epsilonproteobacteria</taxon>
        <taxon>Campylobacterales</taxon>
        <taxon>Helicobacteraceae</taxon>
        <taxon>Helicobacter</taxon>
    </lineage>
</organism>
<evidence type="ECO:0000255" key="1">
    <source>
        <dbReference type="HAMAP-Rule" id="MF_00222"/>
    </source>
</evidence>
<accession>Q7VGS3</accession>
<name>AROE_HELHP</name>
<comment type="function">
    <text evidence="1">Involved in the biosynthesis of the chorismate, which leads to the biosynthesis of aromatic amino acids. Catalyzes the reversible NADPH linked reduction of 3-dehydroshikimate (DHSA) to yield shikimate (SA).</text>
</comment>
<comment type="catalytic activity">
    <reaction evidence="1">
        <text>shikimate + NADP(+) = 3-dehydroshikimate + NADPH + H(+)</text>
        <dbReference type="Rhea" id="RHEA:17737"/>
        <dbReference type="ChEBI" id="CHEBI:15378"/>
        <dbReference type="ChEBI" id="CHEBI:16630"/>
        <dbReference type="ChEBI" id="CHEBI:36208"/>
        <dbReference type="ChEBI" id="CHEBI:57783"/>
        <dbReference type="ChEBI" id="CHEBI:58349"/>
        <dbReference type="EC" id="1.1.1.25"/>
    </reaction>
</comment>
<comment type="pathway">
    <text evidence="1">Metabolic intermediate biosynthesis; chorismate biosynthesis; chorismate from D-erythrose 4-phosphate and phosphoenolpyruvate: step 4/7.</text>
</comment>
<comment type="subunit">
    <text evidence="1">Homodimer.</text>
</comment>
<comment type="similarity">
    <text evidence="1">Belongs to the shikimate dehydrogenase family.</text>
</comment>
<feature type="chain" id="PRO_0000325122" description="Shikimate dehydrogenase (NADP(+))">
    <location>
        <begin position="1"/>
        <end position="268"/>
    </location>
</feature>
<feature type="active site" description="Proton acceptor" evidence="1">
    <location>
        <position position="64"/>
    </location>
</feature>
<feature type="binding site" evidence="1">
    <location>
        <begin position="15"/>
        <end position="17"/>
    </location>
    <ligand>
        <name>shikimate</name>
        <dbReference type="ChEBI" id="CHEBI:36208"/>
    </ligand>
</feature>
<feature type="binding site" evidence="1">
    <location>
        <position position="60"/>
    </location>
    <ligand>
        <name>shikimate</name>
        <dbReference type="ChEBI" id="CHEBI:36208"/>
    </ligand>
</feature>
<feature type="binding site" evidence="1">
    <location>
        <position position="85"/>
    </location>
    <ligand>
        <name>shikimate</name>
        <dbReference type="ChEBI" id="CHEBI:36208"/>
    </ligand>
</feature>
<feature type="binding site" evidence="1">
    <location>
        <position position="101"/>
    </location>
    <ligand>
        <name>shikimate</name>
        <dbReference type="ChEBI" id="CHEBI:36208"/>
    </ligand>
</feature>
<feature type="binding site" evidence="1">
    <location>
        <begin position="121"/>
        <end position="125"/>
    </location>
    <ligand>
        <name>NADP(+)</name>
        <dbReference type="ChEBI" id="CHEBI:58349"/>
    </ligand>
</feature>
<feature type="binding site" evidence="1">
    <location>
        <position position="208"/>
    </location>
    <ligand>
        <name>NADP(+)</name>
        <dbReference type="ChEBI" id="CHEBI:58349"/>
    </ligand>
</feature>
<feature type="binding site" evidence="1">
    <location>
        <position position="210"/>
    </location>
    <ligand>
        <name>shikimate</name>
        <dbReference type="ChEBI" id="CHEBI:36208"/>
    </ligand>
</feature>
<feature type="binding site" evidence="1">
    <location>
        <position position="230"/>
    </location>
    <ligand>
        <name>NADP(+)</name>
        <dbReference type="ChEBI" id="CHEBI:58349"/>
    </ligand>
</feature>
<gene>
    <name evidence="1" type="primary">aroE</name>
    <name type="ordered locus">HH_1247</name>
</gene>
<keyword id="KW-0028">Amino-acid biosynthesis</keyword>
<keyword id="KW-0057">Aromatic amino acid biosynthesis</keyword>
<keyword id="KW-0521">NADP</keyword>
<keyword id="KW-0560">Oxidoreductase</keyword>
<keyword id="KW-1185">Reference proteome</keyword>
<dbReference type="EC" id="1.1.1.25" evidence="1"/>
<dbReference type="EMBL" id="AE017125">
    <property type="protein sequence ID" value="AAP77844.1"/>
    <property type="molecule type" value="Genomic_DNA"/>
</dbReference>
<dbReference type="RefSeq" id="WP_011116087.1">
    <property type="nucleotide sequence ID" value="NC_004917.1"/>
</dbReference>
<dbReference type="SMR" id="Q7VGS3"/>
<dbReference type="STRING" id="235279.HH_1247"/>
<dbReference type="KEGG" id="hhe:HH_1247"/>
<dbReference type="eggNOG" id="COG0169">
    <property type="taxonomic scope" value="Bacteria"/>
</dbReference>
<dbReference type="HOGENOM" id="CLU_044063_2_0_7"/>
<dbReference type="OrthoDB" id="9792692at2"/>
<dbReference type="UniPathway" id="UPA00053">
    <property type="reaction ID" value="UER00087"/>
</dbReference>
<dbReference type="Proteomes" id="UP000002495">
    <property type="component" value="Chromosome"/>
</dbReference>
<dbReference type="GO" id="GO:0005829">
    <property type="term" value="C:cytosol"/>
    <property type="evidence" value="ECO:0007669"/>
    <property type="project" value="TreeGrafter"/>
</dbReference>
<dbReference type="GO" id="GO:0050661">
    <property type="term" value="F:NADP binding"/>
    <property type="evidence" value="ECO:0007669"/>
    <property type="project" value="InterPro"/>
</dbReference>
<dbReference type="GO" id="GO:0004764">
    <property type="term" value="F:shikimate 3-dehydrogenase (NADP+) activity"/>
    <property type="evidence" value="ECO:0007669"/>
    <property type="project" value="UniProtKB-UniRule"/>
</dbReference>
<dbReference type="GO" id="GO:0008652">
    <property type="term" value="P:amino acid biosynthetic process"/>
    <property type="evidence" value="ECO:0007669"/>
    <property type="project" value="UniProtKB-KW"/>
</dbReference>
<dbReference type="GO" id="GO:0009073">
    <property type="term" value="P:aromatic amino acid family biosynthetic process"/>
    <property type="evidence" value="ECO:0007669"/>
    <property type="project" value="UniProtKB-KW"/>
</dbReference>
<dbReference type="GO" id="GO:0009423">
    <property type="term" value="P:chorismate biosynthetic process"/>
    <property type="evidence" value="ECO:0007669"/>
    <property type="project" value="UniProtKB-UniRule"/>
</dbReference>
<dbReference type="GO" id="GO:0019632">
    <property type="term" value="P:shikimate metabolic process"/>
    <property type="evidence" value="ECO:0007669"/>
    <property type="project" value="InterPro"/>
</dbReference>
<dbReference type="CDD" id="cd01065">
    <property type="entry name" value="NAD_bind_Shikimate_DH"/>
    <property type="match status" value="1"/>
</dbReference>
<dbReference type="Gene3D" id="3.40.50.10860">
    <property type="entry name" value="Leucine Dehydrogenase, chain A, domain 1"/>
    <property type="match status" value="1"/>
</dbReference>
<dbReference type="Gene3D" id="3.40.50.720">
    <property type="entry name" value="NAD(P)-binding Rossmann-like Domain"/>
    <property type="match status" value="1"/>
</dbReference>
<dbReference type="HAMAP" id="MF_00222">
    <property type="entry name" value="Shikimate_DH_AroE"/>
    <property type="match status" value="1"/>
</dbReference>
<dbReference type="InterPro" id="IPR046346">
    <property type="entry name" value="Aminoacid_DH-like_N_sf"/>
</dbReference>
<dbReference type="InterPro" id="IPR036291">
    <property type="entry name" value="NAD(P)-bd_dom_sf"/>
</dbReference>
<dbReference type="InterPro" id="IPR011342">
    <property type="entry name" value="Shikimate_DH"/>
</dbReference>
<dbReference type="InterPro" id="IPR013708">
    <property type="entry name" value="Shikimate_DH-bd_N"/>
</dbReference>
<dbReference type="InterPro" id="IPR022893">
    <property type="entry name" value="Shikimate_DH_fam"/>
</dbReference>
<dbReference type="NCBIfam" id="TIGR00507">
    <property type="entry name" value="aroE"/>
    <property type="match status" value="1"/>
</dbReference>
<dbReference type="NCBIfam" id="NF001316">
    <property type="entry name" value="PRK00258.2-5"/>
    <property type="match status" value="1"/>
</dbReference>
<dbReference type="PANTHER" id="PTHR21089:SF1">
    <property type="entry name" value="BIFUNCTIONAL 3-DEHYDROQUINATE DEHYDRATASE_SHIKIMATE DEHYDROGENASE, CHLOROPLASTIC"/>
    <property type="match status" value="1"/>
</dbReference>
<dbReference type="PANTHER" id="PTHR21089">
    <property type="entry name" value="SHIKIMATE DEHYDROGENASE"/>
    <property type="match status" value="1"/>
</dbReference>
<dbReference type="Pfam" id="PF08501">
    <property type="entry name" value="Shikimate_dh_N"/>
    <property type="match status" value="1"/>
</dbReference>
<dbReference type="SUPFAM" id="SSF53223">
    <property type="entry name" value="Aminoacid dehydrogenase-like, N-terminal domain"/>
    <property type="match status" value="1"/>
</dbReference>
<dbReference type="SUPFAM" id="SSF51735">
    <property type="entry name" value="NAD(P)-binding Rossmann-fold domains"/>
    <property type="match status" value="1"/>
</dbReference>
<protein>
    <recommendedName>
        <fullName evidence="1">Shikimate dehydrogenase (NADP(+))</fullName>
        <shortName evidence="1">SDH</shortName>
        <ecNumber evidence="1">1.1.1.25</ecNumber>
    </recommendedName>
</protein>
<proteinExistence type="inferred from homology"/>
<reference key="1">
    <citation type="journal article" date="2003" name="Proc. Natl. Acad. Sci. U.S.A.">
        <title>The complete genome sequence of the carcinogenic bacterium Helicobacter hepaticus.</title>
        <authorList>
            <person name="Suerbaum S."/>
            <person name="Josenhans C."/>
            <person name="Sterzenbach T."/>
            <person name="Drescher B."/>
            <person name="Brandt P."/>
            <person name="Bell M."/>
            <person name="Droege M."/>
            <person name="Fartmann B."/>
            <person name="Fischer H.-P."/>
            <person name="Ge Z."/>
            <person name="Hoerster A."/>
            <person name="Holland R."/>
            <person name="Klein K."/>
            <person name="Koenig J."/>
            <person name="Macko L."/>
            <person name="Mendz G.L."/>
            <person name="Nyakatura G."/>
            <person name="Schauer D.B."/>
            <person name="Shen Z."/>
            <person name="Weber J."/>
            <person name="Frosch M."/>
            <person name="Fox J.G."/>
        </authorList>
    </citation>
    <scope>NUCLEOTIDE SEQUENCE [LARGE SCALE GENOMIC DNA]</scope>
    <source>
        <strain>ATCC 51449 / 3B1</strain>
    </source>
</reference>
<sequence>MLGFFAVYGNPITHSKSPFLHNYAFTKLGLSGYYSRILLDKGANLRQNFLSNGLSGANITLPFKEEAFNQCDEVRGVAQNIGACNTWVLEDKNHLVGYNTDAQGFYECIKEYKIKNALIIGAGGSAKAVAMILQSHNIPTTLINRSVQNLSFFVHKGFECYVNSEFKPTCSYDILINTTSAGLNDNLLPCDESQLKELCSCGKYAFDLIYGKCTPFLALAQSFHLSCSDGKEMLINQAALSFELFCKQKYNKGNLEIQRIASFMNEIL</sequence>